<evidence type="ECO:0000250" key="1"/>
<evidence type="ECO:0000256" key="2">
    <source>
        <dbReference type="SAM" id="MobiDB-lite"/>
    </source>
</evidence>
<evidence type="ECO:0000305" key="3"/>
<accession>P16867</accession>
<sequence>MAPKKEEKPASQAAEAPEVKAEAKPKAVKAPKKKEKKAPAKKVAKEPSAGGEDGDKKSKKKAKVAKSETYKLYIYKVLKQVHPDTGISSKAMSIMNSFINDIFEKVATEASKLSRYNKKPTVTSREIQTAVRLVLPGELAKHAVSEGTKAVTKFTSA</sequence>
<reference key="1">
    <citation type="journal article" date="1990" name="Gene">
        <title>Organization and transcription of Volvox histone-encoding genes: similarities between algal and animal genes.</title>
        <authorList>
            <person name="Mueller K."/>
            <person name="Lindauer A."/>
            <person name="Bruederlein M."/>
            <person name="Schmitt R."/>
        </authorList>
    </citation>
    <scope>NUCLEOTIDE SEQUENCE [GENOMIC DNA]</scope>
    <source>
        <strain>f. Nagariensis / HK10</strain>
    </source>
</reference>
<protein>
    <recommendedName>
        <fullName>Histone H2B.3</fullName>
    </recommendedName>
    <alternativeName>
        <fullName>H2B-III</fullName>
    </alternativeName>
</protein>
<dbReference type="EMBL" id="M31921">
    <property type="protein sequence ID" value="AAA34248.1"/>
    <property type="molecule type" value="Genomic_DNA"/>
</dbReference>
<dbReference type="PIR" id="JQ0795">
    <property type="entry name" value="JQ0795"/>
</dbReference>
<dbReference type="SMR" id="P16867"/>
<dbReference type="OMA" id="RITIEAC"/>
<dbReference type="GO" id="GO:0000786">
    <property type="term" value="C:nucleosome"/>
    <property type="evidence" value="ECO:0007669"/>
    <property type="project" value="UniProtKB-KW"/>
</dbReference>
<dbReference type="GO" id="GO:0005634">
    <property type="term" value="C:nucleus"/>
    <property type="evidence" value="ECO:0007669"/>
    <property type="project" value="UniProtKB-SubCell"/>
</dbReference>
<dbReference type="GO" id="GO:0003677">
    <property type="term" value="F:DNA binding"/>
    <property type="evidence" value="ECO:0007669"/>
    <property type="project" value="UniProtKB-KW"/>
</dbReference>
<dbReference type="GO" id="GO:0046982">
    <property type="term" value="F:protein heterodimerization activity"/>
    <property type="evidence" value="ECO:0007669"/>
    <property type="project" value="InterPro"/>
</dbReference>
<dbReference type="GO" id="GO:0030527">
    <property type="term" value="F:structural constituent of chromatin"/>
    <property type="evidence" value="ECO:0007669"/>
    <property type="project" value="InterPro"/>
</dbReference>
<dbReference type="CDD" id="cd22910">
    <property type="entry name" value="HFD_H2B"/>
    <property type="match status" value="1"/>
</dbReference>
<dbReference type="FunFam" id="1.10.20.10:FF:000014">
    <property type="entry name" value="Histone H2B"/>
    <property type="match status" value="1"/>
</dbReference>
<dbReference type="Gene3D" id="1.10.20.10">
    <property type="entry name" value="Histone, subunit A"/>
    <property type="match status" value="1"/>
</dbReference>
<dbReference type="InterPro" id="IPR009072">
    <property type="entry name" value="Histone-fold"/>
</dbReference>
<dbReference type="InterPro" id="IPR007125">
    <property type="entry name" value="Histone_H2A/H2B/H3"/>
</dbReference>
<dbReference type="InterPro" id="IPR000558">
    <property type="entry name" value="Histone_H2B"/>
</dbReference>
<dbReference type="InterPro" id="IPR055333">
    <property type="entry name" value="HISTONE_H2B_site"/>
</dbReference>
<dbReference type="PANTHER" id="PTHR23428">
    <property type="entry name" value="HISTONE H2B"/>
    <property type="match status" value="1"/>
</dbReference>
<dbReference type="Pfam" id="PF00125">
    <property type="entry name" value="Histone"/>
    <property type="match status" value="1"/>
</dbReference>
<dbReference type="PRINTS" id="PR00621">
    <property type="entry name" value="HISTONEH2B"/>
</dbReference>
<dbReference type="SMART" id="SM00427">
    <property type="entry name" value="H2B"/>
    <property type="match status" value="1"/>
</dbReference>
<dbReference type="SUPFAM" id="SSF47113">
    <property type="entry name" value="Histone-fold"/>
    <property type="match status" value="1"/>
</dbReference>
<dbReference type="PROSITE" id="PS00357">
    <property type="entry name" value="HISTONE_H2B"/>
    <property type="match status" value="1"/>
</dbReference>
<organism>
    <name type="scientific">Volvox carteri</name>
    <name type="common">Green alga</name>
    <dbReference type="NCBI Taxonomy" id="3067"/>
    <lineage>
        <taxon>Eukaryota</taxon>
        <taxon>Viridiplantae</taxon>
        <taxon>Chlorophyta</taxon>
        <taxon>core chlorophytes</taxon>
        <taxon>Chlorophyceae</taxon>
        <taxon>CS clade</taxon>
        <taxon>Chlamydomonadales</taxon>
        <taxon>Volvocaceae</taxon>
        <taxon>Volvox</taxon>
    </lineage>
</organism>
<comment type="function">
    <text>Core component of nucleosome. Nucleosomes wrap and compact DNA into chromatin, limiting DNA accessibility to the cellular machineries which require DNA as a template. Histones thereby play a central role in transcription regulation, DNA repair, DNA replication and chromosomal stability. DNA accessibility is regulated via a complex set of post-translational modifications of histones, also called histone code, and nucleosome remodeling.</text>
</comment>
<comment type="subunit">
    <text>The nucleosome is a histone octamer containing two molecules each of H2A, H2B, H3 and H4 assembled in one H3-H4 heterotetramer and two H2A-H2B heterodimers. The octamer wraps approximately 147 bp of DNA.</text>
</comment>
<comment type="subcellular location">
    <subcellularLocation>
        <location>Nucleus</location>
    </subcellularLocation>
    <subcellularLocation>
        <location>Chromosome</location>
    </subcellularLocation>
</comment>
<comment type="PTM">
    <text evidence="1">Monoubiquitinated to form H2BK143ub1; may give a specific tag for epigenetic transcriptional activation.</text>
</comment>
<comment type="similarity">
    <text evidence="3">Belongs to the histone H2B family.</text>
</comment>
<comment type="caution">
    <text evidence="3">To ensure consistency between histone entries, we follow the 'Brno' nomenclature for histone modifications, with positions referring to those used in the literature for the 'closest' model organism. Due to slight variations in histone sequences between organisms and to the presence of initiator methionine in UniProtKB/Swiss-Prot sequences, the actual positions of modified amino acids in the sequence generally differ. In this entry the following conventions are used: H2BK143ub1 = monoubiquitinated Lys-153.</text>
</comment>
<keyword id="KW-0158">Chromosome</keyword>
<keyword id="KW-0238">DNA-binding</keyword>
<keyword id="KW-1017">Isopeptide bond</keyword>
<keyword id="KW-0544">Nucleosome core</keyword>
<keyword id="KW-0539">Nucleus</keyword>
<keyword id="KW-0832">Ubl conjugation</keyword>
<feature type="initiator methionine" description="Removed" evidence="1">
    <location>
        <position position="1"/>
    </location>
</feature>
<feature type="chain" id="PRO_0000071922" description="Histone H2B.3">
    <location>
        <begin position="2"/>
        <end position="157"/>
    </location>
</feature>
<feature type="region of interest" description="Disordered" evidence="2">
    <location>
        <begin position="1"/>
        <end position="64"/>
    </location>
</feature>
<feature type="compositionally biased region" description="Basic residues" evidence="2">
    <location>
        <begin position="26"/>
        <end position="42"/>
    </location>
</feature>
<feature type="cross-link" description="Glycyl lysine isopeptide (Lys-Gly) (interchain with G-Cter in ubiquitin)" evidence="1">
    <location>
        <position position="153"/>
    </location>
</feature>
<name>H2B3_VOLCA</name>
<proteinExistence type="inferred from homology"/>